<reference key="1">
    <citation type="journal article" date="2008" name="Environ. Microbiol.">
        <title>The genome of Erwinia tasmaniensis strain Et1/99, a non-pathogenic bacterium in the genus Erwinia.</title>
        <authorList>
            <person name="Kube M."/>
            <person name="Migdoll A.M."/>
            <person name="Mueller I."/>
            <person name="Kuhl H."/>
            <person name="Beck A."/>
            <person name="Reinhardt R."/>
            <person name="Geider K."/>
        </authorList>
    </citation>
    <scope>NUCLEOTIDE SEQUENCE [LARGE SCALE GENOMIC DNA]</scope>
    <source>
        <strain>DSM 17950 / CFBP 7177 / CIP 109463 / NCPPB 4357 / Et1/99</strain>
    </source>
</reference>
<evidence type="ECO:0000255" key="1">
    <source>
        <dbReference type="HAMAP-Rule" id="MF_01044"/>
    </source>
</evidence>
<name>TSGA_ERWT9</name>
<dbReference type="EMBL" id="CU468135">
    <property type="protein sequence ID" value="CAO98241.1"/>
    <property type="molecule type" value="Genomic_DNA"/>
</dbReference>
<dbReference type="RefSeq" id="WP_012442873.1">
    <property type="nucleotide sequence ID" value="NC_010694.1"/>
</dbReference>
<dbReference type="SMR" id="B2VK30"/>
<dbReference type="STRING" id="465817.ETA_31950"/>
<dbReference type="KEGG" id="eta:ETA_31950"/>
<dbReference type="eggNOG" id="COG0738">
    <property type="taxonomic scope" value="Bacteria"/>
</dbReference>
<dbReference type="HOGENOM" id="CLU_056916_0_0_6"/>
<dbReference type="OrthoDB" id="8577032at2"/>
<dbReference type="Proteomes" id="UP000001726">
    <property type="component" value="Chromosome"/>
</dbReference>
<dbReference type="GO" id="GO:0005886">
    <property type="term" value="C:plasma membrane"/>
    <property type="evidence" value="ECO:0007669"/>
    <property type="project" value="UniProtKB-SubCell"/>
</dbReference>
<dbReference type="GO" id="GO:0022857">
    <property type="term" value="F:transmembrane transporter activity"/>
    <property type="evidence" value="ECO:0007669"/>
    <property type="project" value="InterPro"/>
</dbReference>
<dbReference type="Gene3D" id="1.20.1250.20">
    <property type="entry name" value="MFS general substrate transporter like domains"/>
    <property type="match status" value="2"/>
</dbReference>
<dbReference type="HAMAP" id="MF_01044">
    <property type="entry name" value="MFS_TsgA"/>
    <property type="match status" value="1"/>
</dbReference>
<dbReference type="InterPro" id="IPR011701">
    <property type="entry name" value="MFS"/>
</dbReference>
<dbReference type="InterPro" id="IPR020846">
    <property type="entry name" value="MFS_dom"/>
</dbReference>
<dbReference type="InterPro" id="IPR036259">
    <property type="entry name" value="MFS_trans_sf"/>
</dbReference>
<dbReference type="InterPro" id="IPR023528">
    <property type="entry name" value="MFS_TsgA"/>
</dbReference>
<dbReference type="InterPro" id="IPR050375">
    <property type="entry name" value="MFS_TsgA-like"/>
</dbReference>
<dbReference type="NCBIfam" id="NF002982">
    <property type="entry name" value="PRK03699.1"/>
    <property type="match status" value="1"/>
</dbReference>
<dbReference type="PANTHER" id="PTHR43702">
    <property type="entry name" value="L-FUCOSE-PROTON SYMPORTER"/>
    <property type="match status" value="1"/>
</dbReference>
<dbReference type="PANTHER" id="PTHR43702:SF3">
    <property type="entry name" value="PROTEIN TSGA"/>
    <property type="match status" value="1"/>
</dbReference>
<dbReference type="Pfam" id="PF07690">
    <property type="entry name" value="MFS_1"/>
    <property type="match status" value="1"/>
</dbReference>
<dbReference type="SUPFAM" id="SSF103473">
    <property type="entry name" value="MFS general substrate transporter"/>
    <property type="match status" value="1"/>
</dbReference>
<dbReference type="PROSITE" id="PS50850">
    <property type="entry name" value="MFS"/>
    <property type="match status" value="1"/>
</dbReference>
<sequence length="394" mass="43289">MTNRDRIGLTWISFFSYALTGAVVIVTGMVLENIAAYFQLPVAQMSNTFTFLNAGILLAVFLNAWLMEIVPLKRQLIFGFVLMVLAVLGLMNSHSLSVFSLCMFVLGVVSGITMSIGTFLITHLYEGRQRGSRLLFTDSFFSMAGTLFPIIAAAILARSLPWYWVYACIGVIYVAIFILALCFEFPQLGKKAVQGQPVAKEKWGLGVALLAVAALCYILGQLGFIGWVPQYATKNMGMDITEAGSVVGYFWTAYMIGMWAFSAILRFFDPQRIVTALALASTLLMYWFINTTDASMLKWIIMGLGFFSSAIYTTIITLGSLQTKVSSPKLVNFILTCGTIGTMLTFVVTGPIVDKAGFHAALATTNSLYAVVFLMCLLLGFVSKHKQHGHMDPH</sequence>
<protein>
    <recommendedName>
        <fullName evidence="1">Protein TsgA homolog</fullName>
    </recommendedName>
</protein>
<keyword id="KW-0997">Cell inner membrane</keyword>
<keyword id="KW-1003">Cell membrane</keyword>
<keyword id="KW-0472">Membrane</keyword>
<keyword id="KW-1185">Reference proteome</keyword>
<keyword id="KW-0812">Transmembrane</keyword>
<keyword id="KW-1133">Transmembrane helix</keyword>
<feature type="chain" id="PRO_1000136144" description="Protein TsgA homolog">
    <location>
        <begin position="1"/>
        <end position="394"/>
    </location>
</feature>
<feature type="transmembrane region" description="Helical" evidence="1">
    <location>
        <begin position="11"/>
        <end position="31"/>
    </location>
</feature>
<feature type="transmembrane region" description="Helical" evidence="1">
    <location>
        <begin position="51"/>
        <end position="71"/>
    </location>
</feature>
<feature type="transmembrane region" description="Helical" evidence="1">
    <location>
        <begin position="76"/>
        <end position="96"/>
    </location>
</feature>
<feature type="transmembrane region" description="Helical" evidence="1">
    <location>
        <begin position="101"/>
        <end position="121"/>
    </location>
</feature>
<feature type="transmembrane region" description="Helical" evidence="1">
    <location>
        <begin position="135"/>
        <end position="155"/>
    </location>
</feature>
<feature type="transmembrane region" description="Helical" evidence="1">
    <location>
        <begin position="163"/>
        <end position="183"/>
    </location>
</feature>
<feature type="transmembrane region" description="Helical" evidence="1">
    <location>
        <begin position="205"/>
        <end position="225"/>
    </location>
</feature>
<feature type="transmembrane region" description="Helical" evidence="1">
    <location>
        <begin position="245"/>
        <end position="265"/>
    </location>
</feature>
<feature type="transmembrane region" description="Helical" evidence="1">
    <location>
        <begin position="273"/>
        <end position="293"/>
    </location>
</feature>
<feature type="transmembrane region" description="Helical" evidence="1">
    <location>
        <begin position="299"/>
        <end position="319"/>
    </location>
</feature>
<feature type="transmembrane region" description="Helical" evidence="1">
    <location>
        <begin position="333"/>
        <end position="353"/>
    </location>
</feature>
<feature type="transmembrane region" description="Helical" evidence="1">
    <location>
        <begin position="362"/>
        <end position="382"/>
    </location>
</feature>
<accession>B2VK30</accession>
<gene>
    <name evidence="1" type="primary">tsgA</name>
    <name type="ordered locus">ETA_31950</name>
</gene>
<organism>
    <name type="scientific">Erwinia tasmaniensis (strain DSM 17950 / CFBP 7177 / CIP 109463 / NCPPB 4357 / Et1/99)</name>
    <dbReference type="NCBI Taxonomy" id="465817"/>
    <lineage>
        <taxon>Bacteria</taxon>
        <taxon>Pseudomonadati</taxon>
        <taxon>Pseudomonadota</taxon>
        <taxon>Gammaproteobacteria</taxon>
        <taxon>Enterobacterales</taxon>
        <taxon>Erwiniaceae</taxon>
        <taxon>Erwinia</taxon>
    </lineage>
</organism>
<proteinExistence type="inferred from homology"/>
<comment type="subcellular location">
    <subcellularLocation>
        <location evidence="1">Cell inner membrane</location>
        <topology evidence="1">Multi-pass membrane protein</topology>
    </subcellularLocation>
</comment>
<comment type="similarity">
    <text evidence="1">Belongs to the major facilitator superfamily. TsgA family.</text>
</comment>